<sequence>MGRGRSSSSSSIESSCKSNPFGVSSSNTRNLSTDLRLGLSFGSSSGQYYNGGDNHEYDGVGAAEEMMIMEEEEQNECNSVGSFYVKVNMEGVPIGRKIDLLSLNGYHDLITTLDYMFNASILWAEEEDMCSEKSHVLTYADKEGDWMMVGDVPWEMFLSSVRRLKISRAYHY</sequence>
<keyword id="KW-0927">Auxin signaling pathway</keyword>
<keyword id="KW-0539">Nucleus</keyword>
<keyword id="KW-1185">Reference proteome</keyword>
<keyword id="KW-0678">Repressor</keyword>
<keyword id="KW-0804">Transcription</keyword>
<keyword id="KW-0805">Transcription regulation</keyword>
<comment type="function">
    <text evidence="4">Aux/IAA proteins are short-lived transcriptional factors that function as repressors of early auxin response genes at low auxin concentrations. Repression is thought to result from the interaction with auxin response factors (ARFs), proteins that bind to the auxin-responsive promoter element (AuxRE). Formation of heterodimers with ARF proteins may alter their ability to modulate early auxin response genes expression.</text>
</comment>
<comment type="subunit">
    <text evidence="1">Homodimers and heterodimers.</text>
</comment>
<comment type="interaction">
    <interactant intactId="EBI-3946710">
        <id>Q9M1R4</id>
    </interactant>
    <interactant intactId="EBI-1778690">
        <id>Q9SJN0</id>
        <label>ABI5</label>
    </interactant>
    <organismsDiffer>false</organismsDiffer>
    <experiments>3</experiments>
</comment>
<comment type="interaction">
    <interactant intactId="EBI-3946710">
        <id>Q9M1R4</id>
    </interactant>
    <interactant intactId="EBI-618423">
        <id>Q9LKL2</id>
        <label>APRR1</label>
    </interactant>
    <organismsDiffer>false</organismsDiffer>
    <experiments>3</experiments>
</comment>
<comment type="interaction">
    <interactant intactId="EBI-3946710">
        <id>Q9M1R4</id>
    </interactant>
    <interactant intactId="EBI-1100737">
        <id>Q8L9Y3</id>
        <label>ARR14</label>
    </interactant>
    <organismsDiffer>false</organismsDiffer>
    <experiments>3</experiments>
</comment>
<comment type="interaction">
    <interactant intactId="EBI-3946710">
        <id>Q9M1R4</id>
    </interactant>
    <interactant intactId="EBI-602959">
        <id>Q38825</id>
        <label>IAA7</label>
    </interactant>
    <organismsDiffer>false</organismsDiffer>
    <experiments>4</experiments>
</comment>
<comment type="interaction">
    <interactant intactId="EBI-3946710">
        <id>Q9M1R4</id>
    </interactant>
    <interactant intactId="EBI-1789562">
        <id>Q9SGU3</id>
        <label>MYB72</label>
    </interactant>
    <organismsDiffer>false</organismsDiffer>
    <experiments>3</experiments>
</comment>
<comment type="interaction">
    <interactant intactId="EBI-3946710">
        <id>Q9M1R4</id>
    </interactant>
    <interactant intactId="EBI-2365037">
        <id>Q9SJA8</id>
        <label>WRKY17</label>
    </interactant>
    <organismsDiffer>false</organismsDiffer>
    <experiments>3</experiments>
</comment>
<comment type="interaction">
    <interactant intactId="EBI-3946710">
        <id>Q9M1R4</id>
    </interactant>
    <interactant intactId="EBI-1239118">
        <id>O04336</id>
        <label>WRKY21</label>
    </interactant>
    <organismsDiffer>false</organismsDiffer>
    <experiments>3</experiments>
</comment>
<comment type="interaction">
    <interactant intactId="EBI-3946710">
        <id>Q9M1R4</id>
    </interactant>
    <interactant intactId="EBI-15202502">
        <id>Q8H0Y8</id>
        <label>WRKY41</label>
    </interactant>
    <organismsDiffer>false</organismsDiffer>
    <experiments>3</experiments>
</comment>
<comment type="interaction">
    <interactant intactId="EBI-3946710">
        <id>Q9M1R4</id>
    </interactant>
    <interactant intactId="EBI-2364652">
        <id>Q9STX0</id>
        <label>WRKY7</label>
    </interactant>
    <organismsDiffer>false</organismsDiffer>
    <experiments>5</experiments>
</comment>
<comment type="subcellular location">
    <subcellularLocation>
        <location evidence="1">Nucleus</location>
    </subcellularLocation>
</comment>
<comment type="induction">
    <text evidence="1">By auxin.</text>
</comment>
<comment type="domain">
    <text>The N-terminal half of the protein contains two conserved domains I and II. Domain I includes a slightly degenerated ERF-associated amphiphilic repression (EAR) motif which seems to be involved in the activity of transcriptional repression. Domain II is required for the correct degradation of the protein through the SCF-mediated ubiquitin-proteasome pathway. Interactions between Aux/IAA proteins and auxin response factors (ARFs) occur through their C-terminal dimerization domains III and IV.</text>
</comment>
<comment type="similarity">
    <text evidence="5">Belongs to the Aux/IAA family.</text>
</comment>
<dbReference type="EMBL" id="AL138651">
    <property type="protein sequence ID" value="CAB71870.1"/>
    <property type="molecule type" value="Genomic_DNA"/>
</dbReference>
<dbReference type="EMBL" id="CP002686">
    <property type="protein sequence ID" value="AEE80310.1"/>
    <property type="molecule type" value="Genomic_DNA"/>
</dbReference>
<dbReference type="EMBL" id="AY669801">
    <property type="protein sequence ID" value="AAT67085.1"/>
    <property type="molecule type" value="mRNA"/>
</dbReference>
<dbReference type="PIR" id="T48002">
    <property type="entry name" value="T48002"/>
</dbReference>
<dbReference type="RefSeq" id="NP_191769.1">
    <property type="nucleotide sequence ID" value="NM_116075.3"/>
</dbReference>
<dbReference type="SMR" id="Q9M1R4"/>
<dbReference type="BioGRID" id="10697">
    <property type="interactions" value="37"/>
</dbReference>
<dbReference type="FunCoup" id="Q9M1R4">
    <property type="interactions" value="291"/>
</dbReference>
<dbReference type="IntAct" id="Q9M1R4">
    <property type="interactions" value="32"/>
</dbReference>
<dbReference type="STRING" id="3702.Q9M1R4"/>
<dbReference type="PaxDb" id="3702-AT3G62100.1"/>
<dbReference type="EnsemblPlants" id="AT3G62100.1">
    <property type="protein sequence ID" value="AT3G62100.1"/>
    <property type="gene ID" value="AT3G62100"/>
</dbReference>
<dbReference type="GeneID" id="825383"/>
<dbReference type="Gramene" id="AT3G62100.1">
    <property type="protein sequence ID" value="AT3G62100.1"/>
    <property type="gene ID" value="AT3G62100"/>
</dbReference>
<dbReference type="KEGG" id="ath:AT3G62100"/>
<dbReference type="Araport" id="AT3G62100"/>
<dbReference type="TAIR" id="AT3G62100">
    <property type="gene designation" value="IAA30"/>
</dbReference>
<dbReference type="eggNOG" id="ENOG502S04C">
    <property type="taxonomic scope" value="Eukaryota"/>
</dbReference>
<dbReference type="HOGENOM" id="CLU_049393_3_1_1"/>
<dbReference type="InParanoid" id="Q9M1R4"/>
<dbReference type="OMA" id="VQSERCH"/>
<dbReference type="OrthoDB" id="652411at2759"/>
<dbReference type="PhylomeDB" id="Q9M1R4"/>
<dbReference type="PRO" id="PR:Q9M1R4"/>
<dbReference type="Proteomes" id="UP000006548">
    <property type="component" value="Chromosome 3"/>
</dbReference>
<dbReference type="ExpressionAtlas" id="Q9M1R4">
    <property type="expression patterns" value="baseline and differential"/>
</dbReference>
<dbReference type="GO" id="GO:0005634">
    <property type="term" value="C:nucleus"/>
    <property type="evidence" value="ECO:0007669"/>
    <property type="project" value="UniProtKB-SubCell"/>
</dbReference>
<dbReference type="GO" id="GO:0003700">
    <property type="term" value="F:DNA-binding transcription factor activity"/>
    <property type="evidence" value="ECO:0000250"/>
    <property type="project" value="TAIR"/>
</dbReference>
<dbReference type="GO" id="GO:0000976">
    <property type="term" value="F:transcription cis-regulatory region binding"/>
    <property type="evidence" value="ECO:0000353"/>
    <property type="project" value="TAIR"/>
</dbReference>
<dbReference type="GO" id="GO:0009734">
    <property type="term" value="P:auxin-activated signaling pathway"/>
    <property type="evidence" value="ECO:0007669"/>
    <property type="project" value="UniProtKB-KW"/>
</dbReference>
<dbReference type="GO" id="GO:0009630">
    <property type="term" value="P:gravitropism"/>
    <property type="evidence" value="ECO:0000315"/>
    <property type="project" value="TAIR"/>
</dbReference>
<dbReference type="GO" id="GO:0009733">
    <property type="term" value="P:response to auxin"/>
    <property type="evidence" value="ECO:0000270"/>
    <property type="project" value="TAIR"/>
</dbReference>
<dbReference type="GO" id="GO:0048364">
    <property type="term" value="P:root development"/>
    <property type="evidence" value="ECO:0000315"/>
    <property type="project" value="TAIR"/>
</dbReference>
<dbReference type="GO" id="GO:0010262">
    <property type="term" value="P:somatic embryogenesis"/>
    <property type="evidence" value="ECO:0000315"/>
    <property type="project" value="TAIR"/>
</dbReference>
<dbReference type="FunFam" id="3.10.20.90:FF:000247">
    <property type="entry name" value="Auxin-responsive protein"/>
    <property type="match status" value="1"/>
</dbReference>
<dbReference type="Gene3D" id="3.10.20.90">
    <property type="entry name" value="Phosphatidylinositol 3-kinase Catalytic Subunit, Chain A, domain 1"/>
    <property type="match status" value="1"/>
</dbReference>
<dbReference type="InterPro" id="IPR033389">
    <property type="entry name" value="AUX/IAA_dom"/>
</dbReference>
<dbReference type="InterPro" id="IPR003311">
    <property type="entry name" value="AUX_IAA"/>
</dbReference>
<dbReference type="InterPro" id="IPR053793">
    <property type="entry name" value="PB1-like"/>
</dbReference>
<dbReference type="PANTHER" id="PTHR31734">
    <property type="entry name" value="AUXIN-RESPONSIVE PROTEIN IAA17"/>
    <property type="match status" value="1"/>
</dbReference>
<dbReference type="PANTHER" id="PTHR31734:SF94">
    <property type="entry name" value="AUXIN-RESPONSIVE PROTEIN IAA30"/>
    <property type="match status" value="1"/>
</dbReference>
<dbReference type="Pfam" id="PF02309">
    <property type="entry name" value="AUX_IAA"/>
    <property type="match status" value="1"/>
</dbReference>
<dbReference type="SUPFAM" id="SSF54277">
    <property type="entry name" value="CAD &amp; PB1 domains"/>
    <property type="match status" value="1"/>
</dbReference>
<dbReference type="PROSITE" id="PS51745">
    <property type="entry name" value="PB1"/>
    <property type="match status" value="1"/>
</dbReference>
<reference key="1">
    <citation type="journal article" date="2000" name="Nature">
        <title>Sequence and analysis of chromosome 3 of the plant Arabidopsis thaliana.</title>
        <authorList>
            <person name="Salanoubat M."/>
            <person name="Lemcke K."/>
            <person name="Rieger M."/>
            <person name="Ansorge W."/>
            <person name="Unseld M."/>
            <person name="Fartmann B."/>
            <person name="Valle G."/>
            <person name="Bloecker H."/>
            <person name="Perez-Alonso M."/>
            <person name="Obermaier B."/>
            <person name="Delseny M."/>
            <person name="Boutry M."/>
            <person name="Grivell L.A."/>
            <person name="Mache R."/>
            <person name="Puigdomenech P."/>
            <person name="De Simone V."/>
            <person name="Choisne N."/>
            <person name="Artiguenave F."/>
            <person name="Robert C."/>
            <person name="Brottier P."/>
            <person name="Wincker P."/>
            <person name="Cattolico L."/>
            <person name="Weissenbach J."/>
            <person name="Saurin W."/>
            <person name="Quetier F."/>
            <person name="Schaefer M."/>
            <person name="Mueller-Auer S."/>
            <person name="Gabel C."/>
            <person name="Fuchs M."/>
            <person name="Benes V."/>
            <person name="Wurmbach E."/>
            <person name="Drzonek H."/>
            <person name="Erfle H."/>
            <person name="Jordan N."/>
            <person name="Bangert S."/>
            <person name="Wiedelmann R."/>
            <person name="Kranz H."/>
            <person name="Voss H."/>
            <person name="Holland R."/>
            <person name="Brandt P."/>
            <person name="Nyakatura G."/>
            <person name="Vezzi A."/>
            <person name="D'Angelo M."/>
            <person name="Pallavicini A."/>
            <person name="Toppo S."/>
            <person name="Simionati B."/>
            <person name="Conrad A."/>
            <person name="Hornischer K."/>
            <person name="Kauer G."/>
            <person name="Loehnert T.-H."/>
            <person name="Nordsiek G."/>
            <person name="Reichelt J."/>
            <person name="Scharfe M."/>
            <person name="Schoen O."/>
            <person name="Bargues M."/>
            <person name="Terol J."/>
            <person name="Climent J."/>
            <person name="Navarro P."/>
            <person name="Collado C."/>
            <person name="Perez-Perez A."/>
            <person name="Ottenwaelder B."/>
            <person name="Duchemin D."/>
            <person name="Cooke R."/>
            <person name="Laudie M."/>
            <person name="Berger-Llauro C."/>
            <person name="Purnelle B."/>
            <person name="Masuy D."/>
            <person name="de Haan M."/>
            <person name="Maarse A.C."/>
            <person name="Alcaraz J.-P."/>
            <person name="Cottet A."/>
            <person name="Casacuberta E."/>
            <person name="Monfort A."/>
            <person name="Argiriou A."/>
            <person name="Flores M."/>
            <person name="Liguori R."/>
            <person name="Vitale D."/>
            <person name="Mannhaupt G."/>
            <person name="Haase D."/>
            <person name="Schoof H."/>
            <person name="Rudd S."/>
            <person name="Zaccaria P."/>
            <person name="Mewes H.-W."/>
            <person name="Mayer K.F.X."/>
            <person name="Kaul S."/>
            <person name="Town C.D."/>
            <person name="Koo H.L."/>
            <person name="Tallon L.J."/>
            <person name="Jenkins J."/>
            <person name="Rooney T."/>
            <person name="Rizzo M."/>
            <person name="Walts A."/>
            <person name="Utterback T."/>
            <person name="Fujii C.Y."/>
            <person name="Shea T.P."/>
            <person name="Creasy T.H."/>
            <person name="Haas B."/>
            <person name="Maiti R."/>
            <person name="Wu D."/>
            <person name="Peterson J."/>
            <person name="Van Aken S."/>
            <person name="Pai G."/>
            <person name="Militscher J."/>
            <person name="Sellers P."/>
            <person name="Gill J.E."/>
            <person name="Feldblyum T.V."/>
            <person name="Preuss D."/>
            <person name="Lin X."/>
            <person name="Nierman W.C."/>
            <person name="Salzberg S.L."/>
            <person name="White O."/>
            <person name="Venter J.C."/>
            <person name="Fraser C.M."/>
            <person name="Kaneko T."/>
            <person name="Nakamura Y."/>
            <person name="Sato S."/>
            <person name="Kato T."/>
            <person name="Asamizu E."/>
            <person name="Sasamoto S."/>
            <person name="Kimura T."/>
            <person name="Idesawa K."/>
            <person name="Kawashima K."/>
            <person name="Kishida Y."/>
            <person name="Kiyokawa C."/>
            <person name="Kohara M."/>
            <person name="Matsumoto M."/>
            <person name="Matsuno A."/>
            <person name="Muraki A."/>
            <person name="Nakayama S."/>
            <person name="Nakazaki N."/>
            <person name="Shinpo S."/>
            <person name="Takeuchi C."/>
            <person name="Wada T."/>
            <person name="Watanabe A."/>
            <person name="Yamada M."/>
            <person name="Yasuda M."/>
            <person name="Tabata S."/>
        </authorList>
    </citation>
    <scope>NUCLEOTIDE SEQUENCE [LARGE SCALE GENOMIC DNA]</scope>
    <source>
        <strain>cv. Columbia</strain>
    </source>
</reference>
<reference key="2">
    <citation type="journal article" date="2017" name="Plant J.">
        <title>Araport11: a complete reannotation of the Arabidopsis thaliana reference genome.</title>
        <authorList>
            <person name="Cheng C.Y."/>
            <person name="Krishnakumar V."/>
            <person name="Chan A.P."/>
            <person name="Thibaud-Nissen F."/>
            <person name="Schobel S."/>
            <person name="Town C.D."/>
        </authorList>
    </citation>
    <scope>GENOME REANNOTATION</scope>
    <source>
        <strain>cv. Columbia</strain>
    </source>
</reference>
<reference key="3">
    <citation type="submission" date="2004-06" db="EMBL/GenBank/DDBJ databases">
        <title>Arabidopsis open reading frame (ORF) clones.</title>
        <authorList>
            <person name="Yamada K."/>
            <person name="Chang C.H."/>
            <person name="Onodera C.S."/>
            <person name="Yu G."/>
            <person name="Theologis A."/>
        </authorList>
    </citation>
    <scope>NUCLEOTIDE SEQUENCE [LARGE SCALE MRNA]</scope>
    <source>
        <strain>cv. Columbia</strain>
    </source>
</reference>
<reference key="4">
    <citation type="journal article" date="2002" name="Plant Mol. Biol.">
        <title>Genetics of Aux/IAA and ARF action in plant growth and development.</title>
        <authorList>
            <person name="Liscum E."/>
            <person name="Reed J.W."/>
        </authorList>
    </citation>
    <scope>GENE FAMILY</scope>
    <scope>NOMENCLATURE</scope>
    <scope>FUNCTION</scope>
</reference>
<reference key="5">
    <citation type="journal article" date="2004" name="Plant Cell">
        <title>Aux/IAA proteins contain a potent transcriptional repression domain.</title>
        <authorList>
            <person name="Tiwari S.B."/>
            <person name="Hagen G."/>
            <person name="Guilfoyle T.J."/>
        </authorList>
    </citation>
    <scope>TRANSCRIPTIONAL REPRESSION DOMAIN</scope>
</reference>
<proteinExistence type="evidence at protein level"/>
<feature type="chain" id="PRO_0000112856" description="Auxin-responsive protein IAA30">
    <location>
        <begin position="1"/>
        <end position="172"/>
    </location>
</feature>
<feature type="domain" description="PB1" evidence="2">
    <location>
        <begin position="82"/>
        <end position="171"/>
    </location>
</feature>
<feature type="region of interest" description="Disordered" evidence="3">
    <location>
        <begin position="1"/>
        <end position="28"/>
    </location>
</feature>
<feature type="short sequence motif" description="EAR-like (transcriptional repression)">
    <location>
        <begin position="35"/>
        <end position="39"/>
    </location>
</feature>
<feature type="compositionally biased region" description="Low complexity" evidence="3">
    <location>
        <begin position="1"/>
        <end position="18"/>
    </location>
</feature>
<protein>
    <recommendedName>
        <fullName>Auxin-responsive protein IAA30</fullName>
    </recommendedName>
    <alternativeName>
        <fullName>Indoleacetic acid-induced protein 30</fullName>
    </alternativeName>
</protein>
<evidence type="ECO:0000250" key="1"/>
<evidence type="ECO:0000255" key="2">
    <source>
        <dbReference type="PROSITE-ProRule" id="PRU01081"/>
    </source>
</evidence>
<evidence type="ECO:0000256" key="3">
    <source>
        <dbReference type="SAM" id="MobiDB-lite"/>
    </source>
</evidence>
<evidence type="ECO:0000269" key="4">
    <source>
    </source>
</evidence>
<evidence type="ECO:0000305" key="5"/>
<gene>
    <name type="primary">IAA30</name>
    <name type="ordered locus">At3g62100</name>
    <name type="ORF">T17J13.60</name>
</gene>
<accession>Q9M1R4</accession>
<accession>Q2VW99</accession>
<name>IAA30_ARATH</name>
<organism>
    <name type="scientific">Arabidopsis thaliana</name>
    <name type="common">Mouse-ear cress</name>
    <dbReference type="NCBI Taxonomy" id="3702"/>
    <lineage>
        <taxon>Eukaryota</taxon>
        <taxon>Viridiplantae</taxon>
        <taxon>Streptophyta</taxon>
        <taxon>Embryophyta</taxon>
        <taxon>Tracheophyta</taxon>
        <taxon>Spermatophyta</taxon>
        <taxon>Magnoliopsida</taxon>
        <taxon>eudicotyledons</taxon>
        <taxon>Gunneridae</taxon>
        <taxon>Pentapetalae</taxon>
        <taxon>rosids</taxon>
        <taxon>malvids</taxon>
        <taxon>Brassicales</taxon>
        <taxon>Brassicaceae</taxon>
        <taxon>Camelineae</taxon>
        <taxon>Arabidopsis</taxon>
    </lineage>
</organism>